<comment type="function">
    <text evidence="1">Component of the dark-operative protochlorophyllide reductase (DPOR) that uses Mg-ATP and reduced ferredoxin to reduce ring D of protochlorophyllide (Pchlide) to form chlorophyllide a (Chlide). This reaction is light-independent. The NB-protein (ChlN-ChlB) is the catalytic component of the complex.</text>
</comment>
<comment type="catalytic activity">
    <reaction evidence="1">
        <text>chlorophyllide a + oxidized 2[4Fe-4S]-[ferredoxin] + 2 ADP + 2 phosphate = protochlorophyllide a + reduced 2[4Fe-4S]-[ferredoxin] + 2 ATP + 2 H2O</text>
        <dbReference type="Rhea" id="RHEA:28202"/>
        <dbReference type="Rhea" id="RHEA-COMP:10002"/>
        <dbReference type="Rhea" id="RHEA-COMP:10004"/>
        <dbReference type="ChEBI" id="CHEBI:15377"/>
        <dbReference type="ChEBI" id="CHEBI:30616"/>
        <dbReference type="ChEBI" id="CHEBI:33722"/>
        <dbReference type="ChEBI" id="CHEBI:33723"/>
        <dbReference type="ChEBI" id="CHEBI:43474"/>
        <dbReference type="ChEBI" id="CHEBI:83348"/>
        <dbReference type="ChEBI" id="CHEBI:83350"/>
        <dbReference type="ChEBI" id="CHEBI:456216"/>
        <dbReference type="EC" id="1.3.7.7"/>
    </reaction>
</comment>
<comment type="cofactor">
    <cofactor evidence="1">
        <name>[4Fe-4S] cluster</name>
        <dbReference type="ChEBI" id="CHEBI:49883"/>
    </cofactor>
    <text evidence="1">Binds 1 [4Fe-4S] cluster per heterodimer. The cluster is bound at the heterodimer interface by residues from both subunits.</text>
</comment>
<comment type="pathway">
    <text evidence="1">Porphyrin-containing compound metabolism; chlorophyll biosynthesis (light-independent).</text>
</comment>
<comment type="subunit">
    <text evidence="1">Protochlorophyllide reductase is composed of three subunits; ChlL, ChlN and ChlB. Forms a heterotetramer of two ChlB and two ChlN subunits.</text>
</comment>
<comment type="subcellular location">
    <subcellularLocation>
        <location>Plastid</location>
        <location>Chloroplast</location>
    </subcellularLocation>
</comment>
<comment type="similarity">
    <text evidence="1">Belongs to the ChlB/BchB/BchZ family.</text>
</comment>
<proteinExistence type="inferred from homology"/>
<evidence type="ECO:0000255" key="1">
    <source>
        <dbReference type="HAMAP-Rule" id="MF_00353"/>
    </source>
</evidence>
<reference key="1">
    <citation type="submission" date="2003-11" db="EMBL/GenBank/DDBJ databases">
        <title>Whole genome sequence of Porphyra yezoensis chloroplast.</title>
        <authorList>
            <person name="Kunimoto M."/>
            <person name="Morishima K."/>
            <person name="Yoshikawa M."/>
            <person name="Fukuda S."/>
            <person name="Kobayashi T."/>
            <person name="Kobayashi M."/>
            <person name="Okazaki T."/>
            <person name="Ohara I."/>
            <person name="Nakayama I."/>
        </authorList>
    </citation>
    <scope>NUCLEOTIDE SEQUENCE [LARGE SCALE GENOMIC DNA]</scope>
    <source>
        <strain>U-51</strain>
    </source>
</reference>
<protein>
    <recommendedName>
        <fullName evidence="1">Light-independent protochlorophyllide reductase subunit B</fullName>
        <shortName evidence="1">DPOR subunit B</shortName>
        <shortName evidence="1">LI-POR subunit B</shortName>
        <ecNumber evidence="1">1.3.7.7</ecNumber>
    </recommendedName>
</protein>
<accession>Q1XDK8</accession>
<gene>
    <name evidence="1" type="primary">chlB</name>
</gene>
<organism>
    <name type="scientific">Pyropia yezoensis</name>
    <name type="common">Susabi-nori</name>
    <name type="synonym">Porphyra yezoensis</name>
    <dbReference type="NCBI Taxonomy" id="2788"/>
    <lineage>
        <taxon>Eukaryota</taxon>
        <taxon>Rhodophyta</taxon>
        <taxon>Bangiophyceae</taxon>
        <taxon>Bangiales</taxon>
        <taxon>Bangiaceae</taxon>
        <taxon>Pyropia</taxon>
    </lineage>
</organism>
<keyword id="KW-0004">4Fe-4S</keyword>
<keyword id="KW-0067">ATP-binding</keyword>
<keyword id="KW-0149">Chlorophyll biosynthesis</keyword>
<keyword id="KW-0150">Chloroplast</keyword>
<keyword id="KW-0408">Iron</keyword>
<keyword id="KW-0411">Iron-sulfur</keyword>
<keyword id="KW-0479">Metal-binding</keyword>
<keyword id="KW-0547">Nucleotide-binding</keyword>
<keyword id="KW-0560">Oxidoreductase</keyword>
<keyword id="KW-0602">Photosynthesis</keyword>
<keyword id="KW-0934">Plastid</keyword>
<name>CHLB_PYRYE</name>
<sequence>MKLAYWMYAGPAHIGTLRIASSFKKVHAIMHAPLGDDYFNVMRSMLERDRDFTPVTASVVDRHVLARGSQEKVVENITRKDREESPDLVILTPTCTSSILQEDLQNFVSRASIETEADVLLADVNHYRVNELQAGDRTLEQIVTFYMEKAKSNNQVLTQKTKTPSVNIIGAVSLGFHNQHDIAELKRLFQDLDIQINQIIPENASVQDLKKLPSAWFNFIPYRETGLMTARYLEKEFNMPYVDITPMGIVQTAACIRSIQQLVNALGAAVDYEKYIDEQTRFISQSAWFSRSIDCQNLTGKKAIVFGDATHAAAITRILHQEMGIHVAWCGTYCKYDEEWFKDQVQEFCDEVIVSDDHGLIGDLIAKTEPAAIFGTQMERHIGKRLNIPCGVISSPVHIQNFPLSYRPFLGYEGTNQIADLVYNSFTLGMEDHLLEIFGGHDTTEALSIGISAVDSINWSEEAQKELNKIPGFVRGKVKRNTEKFARDCSKNLITLEVMYEAKEKVSS</sequence>
<geneLocation type="chloroplast"/>
<dbReference type="EC" id="1.3.7.7" evidence="1"/>
<dbReference type="EMBL" id="AP006715">
    <property type="protein sequence ID" value="BAE92403.1"/>
    <property type="molecule type" value="Genomic_DNA"/>
</dbReference>
<dbReference type="RefSeq" id="YP_536960.1">
    <property type="nucleotide sequence ID" value="NC_007932.1"/>
</dbReference>
<dbReference type="SMR" id="Q1XDK8"/>
<dbReference type="GeneID" id="3978842"/>
<dbReference type="UniPathway" id="UPA00670"/>
<dbReference type="GO" id="GO:0009507">
    <property type="term" value="C:chloroplast"/>
    <property type="evidence" value="ECO:0007669"/>
    <property type="project" value="UniProtKB-SubCell"/>
</dbReference>
<dbReference type="GO" id="GO:0051539">
    <property type="term" value="F:4 iron, 4 sulfur cluster binding"/>
    <property type="evidence" value="ECO:0007669"/>
    <property type="project" value="UniProtKB-UniRule"/>
</dbReference>
<dbReference type="GO" id="GO:0005524">
    <property type="term" value="F:ATP binding"/>
    <property type="evidence" value="ECO:0007669"/>
    <property type="project" value="UniProtKB-UniRule"/>
</dbReference>
<dbReference type="GO" id="GO:0046872">
    <property type="term" value="F:metal ion binding"/>
    <property type="evidence" value="ECO:0007669"/>
    <property type="project" value="UniProtKB-KW"/>
</dbReference>
<dbReference type="GO" id="GO:0016730">
    <property type="term" value="F:oxidoreductase activity, acting on iron-sulfur proteins as donors"/>
    <property type="evidence" value="ECO:0007669"/>
    <property type="project" value="InterPro"/>
</dbReference>
<dbReference type="GO" id="GO:0016636">
    <property type="term" value="F:oxidoreductase activity, acting on the CH-CH group of donors, iron-sulfur protein as acceptor"/>
    <property type="evidence" value="ECO:0007669"/>
    <property type="project" value="UniProtKB-UniRule"/>
</dbReference>
<dbReference type="GO" id="GO:0036068">
    <property type="term" value="P:light-independent chlorophyll biosynthetic process"/>
    <property type="evidence" value="ECO:0007669"/>
    <property type="project" value="UniProtKB-UniRule"/>
</dbReference>
<dbReference type="GO" id="GO:0019685">
    <property type="term" value="P:photosynthesis, dark reaction"/>
    <property type="evidence" value="ECO:0007669"/>
    <property type="project" value="InterPro"/>
</dbReference>
<dbReference type="CDD" id="cd01981">
    <property type="entry name" value="Pchlide_reductase_B"/>
    <property type="match status" value="1"/>
</dbReference>
<dbReference type="Gene3D" id="1.20.89.20">
    <property type="match status" value="1"/>
</dbReference>
<dbReference type="Gene3D" id="3.40.50.1980">
    <property type="entry name" value="Nitrogenase molybdenum iron protein domain"/>
    <property type="match status" value="3"/>
</dbReference>
<dbReference type="Gene3D" id="1.10.8.550">
    <property type="entry name" value="Proto-chlorophyllide reductase 57 kD subunit B"/>
    <property type="match status" value="1"/>
</dbReference>
<dbReference type="HAMAP" id="MF_00353">
    <property type="entry name" value="ChlB_BchB"/>
    <property type="match status" value="1"/>
</dbReference>
<dbReference type="InterPro" id="IPR050152">
    <property type="entry name" value="ChlB/BchB/BchZ"/>
</dbReference>
<dbReference type="InterPro" id="IPR013580">
    <property type="entry name" value="LI-POR_suB-like_C"/>
</dbReference>
<dbReference type="InterPro" id="IPR000510">
    <property type="entry name" value="Nase/OxRdtase_comp1"/>
</dbReference>
<dbReference type="InterPro" id="IPR042298">
    <property type="entry name" value="P-CP_red_C"/>
</dbReference>
<dbReference type="InterPro" id="IPR005969">
    <property type="entry name" value="Protochl_reductB"/>
</dbReference>
<dbReference type="InterPro" id="IPR016209">
    <property type="entry name" value="Protochlorophyllide_Rdtase"/>
</dbReference>
<dbReference type="NCBIfam" id="TIGR01278">
    <property type="entry name" value="DPOR_BchB"/>
    <property type="match status" value="1"/>
</dbReference>
<dbReference type="PANTHER" id="PTHR33712">
    <property type="entry name" value="LIGHT-INDEPENDENT PROTOCHLOROPHYLLIDE REDUCTASE SUBUNIT B"/>
    <property type="match status" value="1"/>
</dbReference>
<dbReference type="PANTHER" id="PTHR33712:SF7">
    <property type="entry name" value="LIGHT-INDEPENDENT PROTOCHLOROPHYLLIDE REDUCTASE SUBUNIT B"/>
    <property type="match status" value="1"/>
</dbReference>
<dbReference type="Pfam" id="PF00148">
    <property type="entry name" value="Oxidored_nitro"/>
    <property type="match status" value="1"/>
</dbReference>
<dbReference type="Pfam" id="PF08369">
    <property type="entry name" value="PCP_red"/>
    <property type="match status" value="1"/>
</dbReference>
<dbReference type="PIRSF" id="PIRSF000163">
    <property type="entry name" value="PCP_ChlB"/>
    <property type="match status" value="1"/>
</dbReference>
<dbReference type="SUPFAM" id="SSF53807">
    <property type="entry name" value="Helical backbone' metal receptor"/>
    <property type="match status" value="1"/>
</dbReference>
<feature type="chain" id="PRO_0000275259" description="Light-independent protochlorophyllide reductase subunit B">
    <location>
        <begin position="1"/>
        <end position="508"/>
    </location>
</feature>
<feature type="active site" description="Proton donor" evidence="1">
    <location>
        <position position="294"/>
    </location>
</feature>
<feature type="binding site" evidence="1">
    <location>
        <position position="36"/>
    </location>
    <ligand>
        <name>[4Fe-4S] cluster</name>
        <dbReference type="ChEBI" id="CHEBI:49883"/>
        <note>ligand shared with heterodimeric partner</note>
    </ligand>
</feature>
<feature type="binding site" evidence="1">
    <location>
        <begin position="429"/>
        <end position="430"/>
    </location>
    <ligand>
        <name>substrate</name>
    </ligand>
</feature>